<gene>
    <name type="primary">yhfG</name>
    <name type="ordered locus">STM3471</name>
</gene>
<protein>
    <recommendedName>
        <fullName>Uncharacterized protein YhfG</fullName>
    </recommendedName>
</protein>
<proteinExistence type="predicted"/>
<keyword id="KW-1185">Reference proteome</keyword>
<reference key="1">
    <citation type="journal article" date="1990" name="J. Bacteriol.">
        <title>Chromosomal organization and expression of Escherichia coli pabA.</title>
        <authorList>
            <person name="Tran P.V."/>
            <person name="Bannor T.A."/>
            <person name="Doktor S.Z."/>
            <person name="Nichols B.P."/>
        </authorList>
    </citation>
    <scope>NUCLEOTIDE SEQUENCE [GENOMIC DNA]</scope>
</reference>
<reference key="2">
    <citation type="journal article" date="2001" name="Nature">
        <title>Complete genome sequence of Salmonella enterica serovar Typhimurium LT2.</title>
        <authorList>
            <person name="McClelland M."/>
            <person name="Sanderson K.E."/>
            <person name="Spieth J."/>
            <person name="Clifton S.W."/>
            <person name="Latreille P."/>
            <person name="Courtney L."/>
            <person name="Porwollik S."/>
            <person name="Ali J."/>
            <person name="Dante M."/>
            <person name="Du F."/>
            <person name="Hou S."/>
            <person name="Layman D."/>
            <person name="Leonard S."/>
            <person name="Nguyen C."/>
            <person name="Scott K."/>
            <person name="Holmes A."/>
            <person name="Grewal N."/>
            <person name="Mulvaney E."/>
            <person name="Ryan E."/>
            <person name="Sun H."/>
            <person name="Florea L."/>
            <person name="Miller W."/>
            <person name="Stoneking T."/>
            <person name="Nhan M."/>
            <person name="Waterston R."/>
            <person name="Wilson R.K."/>
        </authorList>
    </citation>
    <scope>NUCLEOTIDE SEQUENCE [LARGE SCALE GENOMIC DNA]</scope>
    <source>
        <strain>LT2 / SGSC1412 / ATCC 700720</strain>
    </source>
</reference>
<name>YHFG_SALTY</name>
<sequence>MKKLTDKQKSRFWEQRRNVNFQQSRRLEGIEIPLVTLTADEALVRLDELRRHYER</sequence>
<organism>
    <name type="scientific">Salmonella typhimurium (strain LT2 / SGSC1412 / ATCC 700720)</name>
    <dbReference type="NCBI Taxonomy" id="99287"/>
    <lineage>
        <taxon>Bacteria</taxon>
        <taxon>Pseudomonadati</taxon>
        <taxon>Pseudomonadota</taxon>
        <taxon>Gammaproteobacteria</taxon>
        <taxon>Enterobacterales</taxon>
        <taxon>Enterobacteriaceae</taxon>
        <taxon>Salmonella</taxon>
    </lineage>
</organism>
<accession>P37771</accession>
<dbReference type="EMBL" id="M32355">
    <property type="protein sequence ID" value="AAA27175.1"/>
    <property type="molecule type" value="Genomic_DNA"/>
</dbReference>
<dbReference type="EMBL" id="AE006468">
    <property type="protein sequence ID" value="AAL22333.1"/>
    <property type="molecule type" value="Genomic_DNA"/>
</dbReference>
<dbReference type="RefSeq" id="NP_462374.1">
    <property type="nucleotide sequence ID" value="NC_003197.2"/>
</dbReference>
<dbReference type="RefSeq" id="WP_001521109.1">
    <property type="nucleotide sequence ID" value="NC_003197.2"/>
</dbReference>
<dbReference type="SMR" id="P37771"/>
<dbReference type="STRING" id="99287.STM3471"/>
<dbReference type="PaxDb" id="99287-STM3471"/>
<dbReference type="GeneID" id="1254994"/>
<dbReference type="KEGG" id="stm:STM3471"/>
<dbReference type="PATRIC" id="fig|99287.12.peg.3668"/>
<dbReference type="HOGENOM" id="CLU_188462_1_0_6"/>
<dbReference type="OMA" id="WDAQKNQ"/>
<dbReference type="BioCyc" id="SENT99287:STM3471-MONOMER"/>
<dbReference type="Proteomes" id="UP000001014">
    <property type="component" value="Chromosome"/>
</dbReference>
<dbReference type="InterPro" id="IPR022541">
    <property type="entry name" value="YhfG"/>
</dbReference>
<dbReference type="NCBIfam" id="NF007573">
    <property type="entry name" value="PRK10204.1"/>
    <property type="match status" value="1"/>
</dbReference>
<dbReference type="Pfam" id="PF10832">
    <property type="entry name" value="YhfG"/>
    <property type="match status" value="1"/>
</dbReference>
<feature type="chain" id="PRO_0000169522" description="Uncharacterized protein YhfG">
    <location>
        <begin position="1"/>
        <end position="55"/>
    </location>
</feature>